<keyword id="KW-0066">ATP synthesis</keyword>
<keyword id="KW-1003">Cell membrane</keyword>
<keyword id="KW-0139">CF(1)</keyword>
<keyword id="KW-0375">Hydrogen ion transport</keyword>
<keyword id="KW-0406">Ion transport</keyword>
<keyword id="KW-0472">Membrane</keyword>
<keyword id="KW-0813">Transport</keyword>
<comment type="function">
    <text evidence="1">Produces ATP from ADP in the presence of a proton gradient across the membrane. The gamma chain is believed to be important in regulating ATPase activity and the flow of protons through the CF(0) complex.</text>
</comment>
<comment type="subunit">
    <text evidence="1">F-type ATPases have 2 components, CF(1) - the catalytic core - and CF(0) - the membrane proton channel. CF(1) has five subunits: alpha(3), beta(3), gamma(1), delta(1), epsilon(1). CF(0) has three main subunits: a, b and c.</text>
</comment>
<comment type="subcellular location">
    <subcellularLocation>
        <location evidence="1">Cell membrane</location>
        <topology evidence="1">Peripheral membrane protein</topology>
    </subcellularLocation>
</comment>
<comment type="similarity">
    <text evidence="1">Belongs to the ATPase gamma chain family.</text>
</comment>
<feature type="chain" id="PRO_1000148605" description="ATP synthase gamma chain">
    <location>
        <begin position="1"/>
        <end position="290"/>
    </location>
</feature>
<organism>
    <name type="scientific">Buchnera aphidicola subsp. Acyrthosiphon pisum (strain 5A)</name>
    <dbReference type="NCBI Taxonomy" id="563178"/>
    <lineage>
        <taxon>Bacteria</taxon>
        <taxon>Pseudomonadati</taxon>
        <taxon>Pseudomonadota</taxon>
        <taxon>Gammaproteobacteria</taxon>
        <taxon>Enterobacterales</taxon>
        <taxon>Erwiniaceae</taxon>
        <taxon>Buchnera</taxon>
    </lineage>
</organism>
<accession>B8D8H2</accession>
<name>ATPG_BUCA5</name>
<reference key="1">
    <citation type="journal article" date="2009" name="Science">
        <title>The dynamics and time scale of ongoing genomic erosion in symbiotic bacteria.</title>
        <authorList>
            <person name="Moran N.A."/>
            <person name="McLaughlin H.J."/>
            <person name="Sorek R."/>
        </authorList>
    </citation>
    <scope>NUCLEOTIDE SEQUENCE [LARGE SCALE GENOMIC DNA]</scope>
    <source>
        <strain>5A</strain>
    </source>
</reference>
<protein>
    <recommendedName>
        <fullName evidence="1">ATP synthase gamma chain</fullName>
    </recommendedName>
    <alternativeName>
        <fullName evidence="1">ATP synthase F1 sector gamma subunit</fullName>
    </alternativeName>
    <alternativeName>
        <fullName evidence="1">F-ATPase gamma subunit</fullName>
    </alternativeName>
</protein>
<sequence length="290" mass="33174">MTSTKEIKNKIVSVTNTKKITKAMEMVAVSKMRKTEERMRSGRPYSDIIRKVIDHVTQGNLEYKHSYLEERKTNRIGMIIISTDRGLCGGLNTNLFKQVLFKIQNFAKVNIPCDLILFGLKSLSVFKLCGSNILAKATNLGENPKLEELINSVGIILQEYQYKRIDKIFIAYNKFHNKMSQYPTITQLLPFSKKNDQDASNNNWDYLYEPESKLILDTLFNRYIESQVYQSILENIASEHAARMIAMKTATDNSGNRIKELQLVYNKVRQANITQELNEIVSGASAVSID</sequence>
<evidence type="ECO:0000255" key="1">
    <source>
        <dbReference type="HAMAP-Rule" id="MF_00815"/>
    </source>
</evidence>
<dbReference type="EMBL" id="CP001161">
    <property type="protein sequence ID" value="ACL30394.1"/>
    <property type="molecule type" value="Genomic_DNA"/>
</dbReference>
<dbReference type="RefSeq" id="WP_009873969.1">
    <property type="nucleotide sequence ID" value="NC_011833.1"/>
</dbReference>
<dbReference type="SMR" id="B8D8H2"/>
<dbReference type="KEGG" id="bap:BUAP5A_007"/>
<dbReference type="HOGENOM" id="CLU_050669_0_1_6"/>
<dbReference type="OrthoDB" id="9812769at2"/>
<dbReference type="Proteomes" id="UP000006904">
    <property type="component" value="Chromosome"/>
</dbReference>
<dbReference type="GO" id="GO:0005886">
    <property type="term" value="C:plasma membrane"/>
    <property type="evidence" value="ECO:0007669"/>
    <property type="project" value="UniProtKB-SubCell"/>
</dbReference>
<dbReference type="GO" id="GO:0045259">
    <property type="term" value="C:proton-transporting ATP synthase complex"/>
    <property type="evidence" value="ECO:0007669"/>
    <property type="project" value="UniProtKB-KW"/>
</dbReference>
<dbReference type="GO" id="GO:0005524">
    <property type="term" value="F:ATP binding"/>
    <property type="evidence" value="ECO:0007669"/>
    <property type="project" value="UniProtKB-UniRule"/>
</dbReference>
<dbReference type="GO" id="GO:0046933">
    <property type="term" value="F:proton-transporting ATP synthase activity, rotational mechanism"/>
    <property type="evidence" value="ECO:0007669"/>
    <property type="project" value="UniProtKB-UniRule"/>
</dbReference>
<dbReference type="GO" id="GO:0042777">
    <property type="term" value="P:proton motive force-driven plasma membrane ATP synthesis"/>
    <property type="evidence" value="ECO:0007669"/>
    <property type="project" value="UniProtKB-UniRule"/>
</dbReference>
<dbReference type="CDD" id="cd12151">
    <property type="entry name" value="F1-ATPase_gamma"/>
    <property type="match status" value="1"/>
</dbReference>
<dbReference type="FunFam" id="1.10.287.80:FF:000005">
    <property type="entry name" value="ATP synthase gamma chain"/>
    <property type="match status" value="1"/>
</dbReference>
<dbReference type="Gene3D" id="3.40.1380.10">
    <property type="match status" value="1"/>
</dbReference>
<dbReference type="Gene3D" id="1.10.287.80">
    <property type="entry name" value="ATP synthase, gamma subunit, helix hairpin domain"/>
    <property type="match status" value="1"/>
</dbReference>
<dbReference type="HAMAP" id="MF_00815">
    <property type="entry name" value="ATP_synth_gamma_bact"/>
    <property type="match status" value="1"/>
</dbReference>
<dbReference type="InterPro" id="IPR035968">
    <property type="entry name" value="ATP_synth_F1_ATPase_gsu"/>
</dbReference>
<dbReference type="InterPro" id="IPR000131">
    <property type="entry name" value="ATP_synth_F1_gsu"/>
</dbReference>
<dbReference type="InterPro" id="IPR023632">
    <property type="entry name" value="ATP_synth_F1_gsu_CS"/>
</dbReference>
<dbReference type="NCBIfam" id="TIGR01146">
    <property type="entry name" value="ATPsyn_F1gamma"/>
    <property type="match status" value="1"/>
</dbReference>
<dbReference type="NCBIfam" id="NF004144">
    <property type="entry name" value="PRK05621.1-1"/>
    <property type="match status" value="1"/>
</dbReference>
<dbReference type="PANTHER" id="PTHR11693">
    <property type="entry name" value="ATP SYNTHASE GAMMA CHAIN"/>
    <property type="match status" value="1"/>
</dbReference>
<dbReference type="PANTHER" id="PTHR11693:SF22">
    <property type="entry name" value="ATP SYNTHASE SUBUNIT GAMMA, MITOCHONDRIAL"/>
    <property type="match status" value="1"/>
</dbReference>
<dbReference type="Pfam" id="PF00231">
    <property type="entry name" value="ATP-synt"/>
    <property type="match status" value="1"/>
</dbReference>
<dbReference type="PRINTS" id="PR00126">
    <property type="entry name" value="ATPASEGAMMA"/>
</dbReference>
<dbReference type="SUPFAM" id="SSF52943">
    <property type="entry name" value="ATP synthase (F1-ATPase), gamma subunit"/>
    <property type="match status" value="1"/>
</dbReference>
<dbReference type="PROSITE" id="PS00153">
    <property type="entry name" value="ATPASE_GAMMA"/>
    <property type="match status" value="1"/>
</dbReference>
<proteinExistence type="inferred from homology"/>
<gene>
    <name evidence="1" type="primary">atpG</name>
    <name type="ordered locus">BUAP5A_007</name>
</gene>